<comment type="function">
    <text evidence="1">Involved in the biosynthesis of the chorismate, which leads to the biosynthesis of aromatic amino acids. Catalyzes the reversible NADPH linked reduction of 3-dehydroshikimate (DHSA) to yield shikimate (SA).</text>
</comment>
<comment type="catalytic activity">
    <reaction evidence="1">
        <text>shikimate + NADP(+) = 3-dehydroshikimate + NADPH + H(+)</text>
        <dbReference type="Rhea" id="RHEA:17737"/>
        <dbReference type="ChEBI" id="CHEBI:15378"/>
        <dbReference type="ChEBI" id="CHEBI:16630"/>
        <dbReference type="ChEBI" id="CHEBI:36208"/>
        <dbReference type="ChEBI" id="CHEBI:57783"/>
        <dbReference type="ChEBI" id="CHEBI:58349"/>
        <dbReference type="EC" id="1.1.1.25"/>
    </reaction>
</comment>
<comment type="pathway">
    <text evidence="1">Metabolic intermediate biosynthesis; chorismate biosynthesis; chorismate from D-erythrose 4-phosphate and phosphoenolpyruvate: step 4/7.</text>
</comment>
<comment type="subunit">
    <text evidence="1">Homodimer.</text>
</comment>
<comment type="similarity">
    <text evidence="1">Belongs to the shikimate dehydrogenase family.</text>
</comment>
<organism>
    <name type="scientific">Staphylococcus aureus (strain N315)</name>
    <dbReference type="NCBI Taxonomy" id="158879"/>
    <lineage>
        <taxon>Bacteria</taxon>
        <taxon>Bacillati</taxon>
        <taxon>Bacillota</taxon>
        <taxon>Bacilli</taxon>
        <taxon>Bacillales</taxon>
        <taxon>Staphylococcaceae</taxon>
        <taxon>Staphylococcus</taxon>
    </lineage>
</organism>
<feature type="chain" id="PRO_0000136032" description="Shikimate dehydrogenase (NADP(+))">
    <location>
        <begin position="1"/>
        <end position="268"/>
    </location>
</feature>
<feature type="active site" description="Proton acceptor" evidence="1">
    <location>
        <position position="64"/>
    </location>
</feature>
<feature type="binding site" evidence="1">
    <location>
        <begin position="13"/>
        <end position="15"/>
    </location>
    <ligand>
        <name>shikimate</name>
        <dbReference type="ChEBI" id="CHEBI:36208"/>
    </ligand>
</feature>
<feature type="binding site" evidence="1">
    <location>
        <position position="60"/>
    </location>
    <ligand>
        <name>shikimate</name>
        <dbReference type="ChEBI" id="CHEBI:36208"/>
    </ligand>
</feature>
<feature type="binding site" evidence="1">
    <location>
        <position position="76"/>
    </location>
    <ligand>
        <name>NADP(+)</name>
        <dbReference type="ChEBI" id="CHEBI:58349"/>
    </ligand>
</feature>
<feature type="binding site" evidence="1">
    <location>
        <position position="85"/>
    </location>
    <ligand>
        <name>shikimate</name>
        <dbReference type="ChEBI" id="CHEBI:36208"/>
    </ligand>
</feature>
<feature type="binding site" evidence="1">
    <location>
        <position position="100"/>
    </location>
    <ligand>
        <name>shikimate</name>
        <dbReference type="ChEBI" id="CHEBI:36208"/>
    </ligand>
</feature>
<feature type="binding site" evidence="1">
    <location>
        <begin position="124"/>
        <end position="128"/>
    </location>
    <ligand>
        <name>NADP(+)</name>
        <dbReference type="ChEBI" id="CHEBI:58349"/>
    </ligand>
</feature>
<feature type="binding site" evidence="1">
    <location>
        <begin position="148"/>
        <end position="153"/>
    </location>
    <ligand>
        <name>NADP(+)</name>
        <dbReference type="ChEBI" id="CHEBI:58349"/>
    </ligand>
</feature>
<feature type="binding site" evidence="1">
    <location>
        <position position="209"/>
    </location>
    <ligand>
        <name>NADP(+)</name>
        <dbReference type="ChEBI" id="CHEBI:58349"/>
    </ligand>
</feature>
<feature type="binding site" evidence="1">
    <location>
        <position position="211"/>
    </location>
    <ligand>
        <name>shikimate</name>
        <dbReference type="ChEBI" id="CHEBI:36208"/>
    </ligand>
</feature>
<feature type="binding site" evidence="1">
    <location>
        <position position="232"/>
    </location>
    <ligand>
        <name>NADP(+)</name>
        <dbReference type="ChEBI" id="CHEBI:58349"/>
    </ligand>
</feature>
<keyword id="KW-0028">Amino-acid biosynthesis</keyword>
<keyword id="KW-0057">Aromatic amino acid biosynthesis</keyword>
<keyword id="KW-0521">NADP</keyword>
<keyword id="KW-0560">Oxidoreductase</keyword>
<proteinExistence type="inferred from homology"/>
<name>AROE_STAAN</name>
<protein>
    <recommendedName>
        <fullName evidence="1">Shikimate dehydrogenase (NADP(+))</fullName>
        <shortName evidence="1">SDH</shortName>
        <ecNumber evidence="1">1.1.1.25</ecNumber>
    </recommendedName>
</protein>
<gene>
    <name evidence="1" type="primary">aroE</name>
    <name type="ordered locus">SA1424</name>
</gene>
<evidence type="ECO:0000255" key="1">
    <source>
        <dbReference type="HAMAP-Rule" id="MF_00222"/>
    </source>
</evidence>
<accession>P63594</accession>
<accession>Q99TQ3</accession>
<dbReference type="EC" id="1.1.1.25" evidence="1"/>
<dbReference type="EMBL" id="BA000018">
    <property type="protein sequence ID" value="BAB42688.1"/>
    <property type="molecule type" value="Genomic_DNA"/>
</dbReference>
<dbReference type="PIR" id="C89941">
    <property type="entry name" value="C89941"/>
</dbReference>
<dbReference type="RefSeq" id="WP_000666757.1">
    <property type="nucleotide sequence ID" value="NC_002745.2"/>
</dbReference>
<dbReference type="SMR" id="P63594"/>
<dbReference type="EnsemblBacteria" id="BAB42688">
    <property type="protein sequence ID" value="BAB42688"/>
    <property type="gene ID" value="BAB42688"/>
</dbReference>
<dbReference type="KEGG" id="sau:SA1424"/>
<dbReference type="HOGENOM" id="CLU_044063_4_1_9"/>
<dbReference type="UniPathway" id="UPA00053">
    <property type="reaction ID" value="UER00087"/>
</dbReference>
<dbReference type="GO" id="GO:0005829">
    <property type="term" value="C:cytosol"/>
    <property type="evidence" value="ECO:0007669"/>
    <property type="project" value="TreeGrafter"/>
</dbReference>
<dbReference type="GO" id="GO:0050661">
    <property type="term" value="F:NADP binding"/>
    <property type="evidence" value="ECO:0007669"/>
    <property type="project" value="InterPro"/>
</dbReference>
<dbReference type="GO" id="GO:0004764">
    <property type="term" value="F:shikimate 3-dehydrogenase (NADP+) activity"/>
    <property type="evidence" value="ECO:0007669"/>
    <property type="project" value="UniProtKB-UniRule"/>
</dbReference>
<dbReference type="GO" id="GO:0008652">
    <property type="term" value="P:amino acid biosynthetic process"/>
    <property type="evidence" value="ECO:0007669"/>
    <property type="project" value="UniProtKB-KW"/>
</dbReference>
<dbReference type="GO" id="GO:0009073">
    <property type="term" value="P:aromatic amino acid family biosynthetic process"/>
    <property type="evidence" value="ECO:0007669"/>
    <property type="project" value="UniProtKB-KW"/>
</dbReference>
<dbReference type="GO" id="GO:0009423">
    <property type="term" value="P:chorismate biosynthetic process"/>
    <property type="evidence" value="ECO:0007669"/>
    <property type="project" value="UniProtKB-UniRule"/>
</dbReference>
<dbReference type="GO" id="GO:0019632">
    <property type="term" value="P:shikimate metabolic process"/>
    <property type="evidence" value="ECO:0007669"/>
    <property type="project" value="InterPro"/>
</dbReference>
<dbReference type="CDD" id="cd01065">
    <property type="entry name" value="NAD_bind_Shikimate_DH"/>
    <property type="match status" value="1"/>
</dbReference>
<dbReference type="FunFam" id="3.40.50.10860:FF:000016">
    <property type="entry name" value="Shikimate dehydrogenase (NADP(+))"/>
    <property type="match status" value="1"/>
</dbReference>
<dbReference type="FunFam" id="3.40.50.720:FF:000445">
    <property type="entry name" value="Shikimate dehydrogenase (NADP(+))"/>
    <property type="match status" value="1"/>
</dbReference>
<dbReference type="Gene3D" id="3.40.50.10860">
    <property type="entry name" value="Leucine Dehydrogenase, chain A, domain 1"/>
    <property type="match status" value="1"/>
</dbReference>
<dbReference type="Gene3D" id="3.40.50.720">
    <property type="entry name" value="NAD(P)-binding Rossmann-like Domain"/>
    <property type="match status" value="1"/>
</dbReference>
<dbReference type="HAMAP" id="MF_00222">
    <property type="entry name" value="Shikimate_DH_AroE"/>
    <property type="match status" value="1"/>
</dbReference>
<dbReference type="InterPro" id="IPR046346">
    <property type="entry name" value="Aminoacid_DH-like_N_sf"/>
</dbReference>
<dbReference type="InterPro" id="IPR036291">
    <property type="entry name" value="NAD(P)-bd_dom_sf"/>
</dbReference>
<dbReference type="InterPro" id="IPR041121">
    <property type="entry name" value="SDH_C"/>
</dbReference>
<dbReference type="InterPro" id="IPR011342">
    <property type="entry name" value="Shikimate_DH"/>
</dbReference>
<dbReference type="InterPro" id="IPR013708">
    <property type="entry name" value="Shikimate_DH-bd_N"/>
</dbReference>
<dbReference type="InterPro" id="IPR022893">
    <property type="entry name" value="Shikimate_DH_fam"/>
</dbReference>
<dbReference type="InterPro" id="IPR006151">
    <property type="entry name" value="Shikm_DH/Glu-tRNA_Rdtase"/>
</dbReference>
<dbReference type="NCBIfam" id="TIGR00507">
    <property type="entry name" value="aroE"/>
    <property type="match status" value="1"/>
</dbReference>
<dbReference type="PANTHER" id="PTHR21089:SF1">
    <property type="entry name" value="BIFUNCTIONAL 3-DEHYDROQUINATE DEHYDRATASE_SHIKIMATE DEHYDROGENASE, CHLOROPLASTIC"/>
    <property type="match status" value="1"/>
</dbReference>
<dbReference type="PANTHER" id="PTHR21089">
    <property type="entry name" value="SHIKIMATE DEHYDROGENASE"/>
    <property type="match status" value="1"/>
</dbReference>
<dbReference type="Pfam" id="PF18317">
    <property type="entry name" value="SDH_C"/>
    <property type="match status" value="1"/>
</dbReference>
<dbReference type="Pfam" id="PF01488">
    <property type="entry name" value="Shikimate_DH"/>
    <property type="match status" value="1"/>
</dbReference>
<dbReference type="Pfam" id="PF08501">
    <property type="entry name" value="Shikimate_dh_N"/>
    <property type="match status" value="1"/>
</dbReference>
<dbReference type="SUPFAM" id="SSF53223">
    <property type="entry name" value="Aminoacid dehydrogenase-like, N-terminal domain"/>
    <property type="match status" value="1"/>
</dbReference>
<dbReference type="SUPFAM" id="SSF51735">
    <property type="entry name" value="NAD(P)-binding Rossmann-fold domains"/>
    <property type="match status" value="1"/>
</dbReference>
<sequence>MKFAVIGNPISHSLSPVMHRANFNSLGLDDTYEALNIPIEDFHLIKEIISKKELDGFNITIPHKERIIPYLDYVDEQAINAGAVNTVLIKDGKWIGYNTDGIGYVKGLHSVYPDLENAYILILGAGGASKGIAYELAKFVKPKLTVANRTMARFESWNLNINQISLADAEKYLAEFDIVINTTPAGMAGNNESIINLKHLSPNTLMSDIVYIPYKTPILEEAERKGNHIYNGLDMFVYQGAESFKIWTNKDADINSMKTAVLQQLKGE</sequence>
<reference key="1">
    <citation type="journal article" date="2001" name="Lancet">
        <title>Whole genome sequencing of meticillin-resistant Staphylococcus aureus.</title>
        <authorList>
            <person name="Kuroda M."/>
            <person name="Ohta T."/>
            <person name="Uchiyama I."/>
            <person name="Baba T."/>
            <person name="Yuzawa H."/>
            <person name="Kobayashi I."/>
            <person name="Cui L."/>
            <person name="Oguchi A."/>
            <person name="Aoki K."/>
            <person name="Nagai Y."/>
            <person name="Lian J.-Q."/>
            <person name="Ito T."/>
            <person name="Kanamori M."/>
            <person name="Matsumaru H."/>
            <person name="Maruyama A."/>
            <person name="Murakami H."/>
            <person name="Hosoyama A."/>
            <person name="Mizutani-Ui Y."/>
            <person name="Takahashi N.K."/>
            <person name="Sawano T."/>
            <person name="Inoue R."/>
            <person name="Kaito C."/>
            <person name="Sekimizu K."/>
            <person name="Hirakawa H."/>
            <person name="Kuhara S."/>
            <person name="Goto S."/>
            <person name="Yabuzaki J."/>
            <person name="Kanehisa M."/>
            <person name="Yamashita A."/>
            <person name="Oshima K."/>
            <person name="Furuya K."/>
            <person name="Yoshino C."/>
            <person name="Shiba T."/>
            <person name="Hattori M."/>
            <person name="Ogasawara N."/>
            <person name="Hayashi H."/>
            <person name="Hiramatsu K."/>
        </authorList>
    </citation>
    <scope>NUCLEOTIDE SEQUENCE [LARGE SCALE GENOMIC DNA]</scope>
    <source>
        <strain>N315</strain>
    </source>
</reference>